<proteinExistence type="inferred from homology"/>
<name>RL11_CHESB</name>
<protein>
    <recommendedName>
        <fullName evidence="1">Large ribosomal subunit protein uL11</fullName>
    </recommendedName>
    <alternativeName>
        <fullName evidence="3">50S ribosomal protein L11</fullName>
    </alternativeName>
</protein>
<accession>Q11HA9</accession>
<dbReference type="EMBL" id="CP000390">
    <property type="protein sequence ID" value="ABG63216.1"/>
    <property type="molecule type" value="Genomic_DNA"/>
</dbReference>
<dbReference type="SMR" id="Q11HA9"/>
<dbReference type="STRING" id="266779.Meso_1823"/>
<dbReference type="KEGG" id="mes:Meso_1823"/>
<dbReference type="eggNOG" id="COG0080">
    <property type="taxonomic scope" value="Bacteria"/>
</dbReference>
<dbReference type="HOGENOM" id="CLU_074237_2_0_5"/>
<dbReference type="OrthoDB" id="9802408at2"/>
<dbReference type="GO" id="GO:0022625">
    <property type="term" value="C:cytosolic large ribosomal subunit"/>
    <property type="evidence" value="ECO:0007669"/>
    <property type="project" value="TreeGrafter"/>
</dbReference>
<dbReference type="GO" id="GO:0070180">
    <property type="term" value="F:large ribosomal subunit rRNA binding"/>
    <property type="evidence" value="ECO:0007669"/>
    <property type="project" value="UniProtKB-UniRule"/>
</dbReference>
<dbReference type="GO" id="GO:0003735">
    <property type="term" value="F:structural constituent of ribosome"/>
    <property type="evidence" value="ECO:0007669"/>
    <property type="project" value="InterPro"/>
</dbReference>
<dbReference type="GO" id="GO:0006412">
    <property type="term" value="P:translation"/>
    <property type="evidence" value="ECO:0007669"/>
    <property type="project" value="UniProtKB-UniRule"/>
</dbReference>
<dbReference type="CDD" id="cd00349">
    <property type="entry name" value="Ribosomal_L11"/>
    <property type="match status" value="1"/>
</dbReference>
<dbReference type="FunFam" id="1.10.10.250:FF:000001">
    <property type="entry name" value="50S ribosomal protein L11"/>
    <property type="match status" value="1"/>
</dbReference>
<dbReference type="FunFam" id="3.30.1550.10:FF:000001">
    <property type="entry name" value="50S ribosomal protein L11"/>
    <property type="match status" value="1"/>
</dbReference>
<dbReference type="Gene3D" id="1.10.10.250">
    <property type="entry name" value="Ribosomal protein L11, C-terminal domain"/>
    <property type="match status" value="1"/>
</dbReference>
<dbReference type="Gene3D" id="3.30.1550.10">
    <property type="entry name" value="Ribosomal protein L11/L12, N-terminal domain"/>
    <property type="match status" value="1"/>
</dbReference>
<dbReference type="HAMAP" id="MF_00736">
    <property type="entry name" value="Ribosomal_uL11"/>
    <property type="match status" value="1"/>
</dbReference>
<dbReference type="InterPro" id="IPR000911">
    <property type="entry name" value="Ribosomal_uL11"/>
</dbReference>
<dbReference type="InterPro" id="IPR006519">
    <property type="entry name" value="Ribosomal_uL11_bac-typ"/>
</dbReference>
<dbReference type="InterPro" id="IPR020783">
    <property type="entry name" value="Ribosomal_uL11_C"/>
</dbReference>
<dbReference type="InterPro" id="IPR036769">
    <property type="entry name" value="Ribosomal_uL11_C_sf"/>
</dbReference>
<dbReference type="InterPro" id="IPR020785">
    <property type="entry name" value="Ribosomal_uL11_CS"/>
</dbReference>
<dbReference type="InterPro" id="IPR020784">
    <property type="entry name" value="Ribosomal_uL11_N"/>
</dbReference>
<dbReference type="InterPro" id="IPR036796">
    <property type="entry name" value="Ribosomal_uL11_N_sf"/>
</dbReference>
<dbReference type="NCBIfam" id="TIGR01632">
    <property type="entry name" value="L11_bact"/>
    <property type="match status" value="1"/>
</dbReference>
<dbReference type="PANTHER" id="PTHR11661">
    <property type="entry name" value="60S RIBOSOMAL PROTEIN L12"/>
    <property type="match status" value="1"/>
</dbReference>
<dbReference type="PANTHER" id="PTHR11661:SF1">
    <property type="entry name" value="LARGE RIBOSOMAL SUBUNIT PROTEIN UL11M"/>
    <property type="match status" value="1"/>
</dbReference>
<dbReference type="Pfam" id="PF00298">
    <property type="entry name" value="Ribosomal_L11"/>
    <property type="match status" value="1"/>
</dbReference>
<dbReference type="Pfam" id="PF03946">
    <property type="entry name" value="Ribosomal_L11_N"/>
    <property type="match status" value="1"/>
</dbReference>
<dbReference type="SMART" id="SM00649">
    <property type="entry name" value="RL11"/>
    <property type="match status" value="1"/>
</dbReference>
<dbReference type="SUPFAM" id="SSF54747">
    <property type="entry name" value="Ribosomal L11/L12e N-terminal domain"/>
    <property type="match status" value="1"/>
</dbReference>
<dbReference type="SUPFAM" id="SSF46906">
    <property type="entry name" value="Ribosomal protein L11, C-terminal domain"/>
    <property type="match status" value="1"/>
</dbReference>
<dbReference type="PROSITE" id="PS00359">
    <property type="entry name" value="RIBOSOMAL_L11"/>
    <property type="match status" value="1"/>
</dbReference>
<sequence length="142" mass="15205">MAKKIAGQLKLQVPAGSATPSPPIGPALGQRGINIMEFCKAFNAQSQDLEKGSPIPVVITYYQDKSFTFTMKTPPVSYFLKKAANLKSGSKEPGKQSAGQISRAKVREIAETKMKDLNANDVEAAMRMVEGSARSMGLEVVG</sequence>
<feature type="chain" id="PRO_0000258168" description="Large ribosomal subunit protein uL11">
    <location>
        <begin position="1"/>
        <end position="142"/>
    </location>
</feature>
<feature type="region of interest" description="Disordered" evidence="2">
    <location>
        <begin position="86"/>
        <end position="105"/>
    </location>
</feature>
<organism>
    <name type="scientific">Chelativorans sp. (strain BNC1)</name>
    <dbReference type="NCBI Taxonomy" id="266779"/>
    <lineage>
        <taxon>Bacteria</taxon>
        <taxon>Pseudomonadati</taxon>
        <taxon>Pseudomonadota</taxon>
        <taxon>Alphaproteobacteria</taxon>
        <taxon>Hyphomicrobiales</taxon>
        <taxon>Phyllobacteriaceae</taxon>
        <taxon>Chelativorans</taxon>
    </lineage>
</organism>
<evidence type="ECO:0000255" key="1">
    <source>
        <dbReference type="HAMAP-Rule" id="MF_00736"/>
    </source>
</evidence>
<evidence type="ECO:0000256" key="2">
    <source>
        <dbReference type="SAM" id="MobiDB-lite"/>
    </source>
</evidence>
<evidence type="ECO:0000305" key="3"/>
<reference key="1">
    <citation type="submission" date="2006-06" db="EMBL/GenBank/DDBJ databases">
        <title>Complete sequence of chromosome of Mesorhizobium sp. BNC1.</title>
        <authorList>
            <consortium name="US DOE Joint Genome Institute"/>
            <person name="Copeland A."/>
            <person name="Lucas S."/>
            <person name="Lapidus A."/>
            <person name="Barry K."/>
            <person name="Detter J.C."/>
            <person name="Glavina del Rio T."/>
            <person name="Hammon N."/>
            <person name="Israni S."/>
            <person name="Dalin E."/>
            <person name="Tice H."/>
            <person name="Pitluck S."/>
            <person name="Chertkov O."/>
            <person name="Brettin T."/>
            <person name="Bruce D."/>
            <person name="Han C."/>
            <person name="Tapia R."/>
            <person name="Gilna P."/>
            <person name="Schmutz J."/>
            <person name="Larimer F."/>
            <person name="Land M."/>
            <person name="Hauser L."/>
            <person name="Kyrpides N."/>
            <person name="Mikhailova N."/>
            <person name="Richardson P."/>
        </authorList>
    </citation>
    <scope>NUCLEOTIDE SEQUENCE [LARGE SCALE GENOMIC DNA]</scope>
    <source>
        <strain>BNC1</strain>
    </source>
</reference>
<comment type="function">
    <text evidence="1">Forms part of the ribosomal stalk which helps the ribosome interact with GTP-bound translation factors.</text>
</comment>
<comment type="subunit">
    <text evidence="1">Part of the ribosomal stalk of the 50S ribosomal subunit. Interacts with L10 and the large rRNA to form the base of the stalk. L10 forms an elongated spine to which L12 dimers bind in a sequential fashion forming a multimeric L10(L12)X complex.</text>
</comment>
<comment type="PTM">
    <text evidence="1">One or more lysine residues are methylated.</text>
</comment>
<comment type="similarity">
    <text evidence="1">Belongs to the universal ribosomal protein uL11 family.</text>
</comment>
<gene>
    <name evidence="1" type="primary">rplK</name>
    <name type="ordered locus">Meso_1823</name>
</gene>
<keyword id="KW-0488">Methylation</keyword>
<keyword id="KW-0687">Ribonucleoprotein</keyword>
<keyword id="KW-0689">Ribosomal protein</keyword>
<keyword id="KW-0694">RNA-binding</keyword>
<keyword id="KW-0699">rRNA-binding</keyword>